<comment type="function">
    <text evidence="1">Removes the formyl group from the N-terminal Met of newly synthesized proteins. Requires at least a dipeptide for an efficient rate of reaction. N-terminal L-methionine is a prerequisite for activity but the enzyme has broad specificity at other positions.</text>
</comment>
<comment type="catalytic activity">
    <reaction evidence="1">
        <text>N-terminal N-formyl-L-methionyl-[peptide] + H2O = N-terminal L-methionyl-[peptide] + formate</text>
        <dbReference type="Rhea" id="RHEA:24420"/>
        <dbReference type="Rhea" id="RHEA-COMP:10639"/>
        <dbReference type="Rhea" id="RHEA-COMP:10640"/>
        <dbReference type="ChEBI" id="CHEBI:15377"/>
        <dbReference type="ChEBI" id="CHEBI:15740"/>
        <dbReference type="ChEBI" id="CHEBI:49298"/>
        <dbReference type="ChEBI" id="CHEBI:64731"/>
        <dbReference type="EC" id="3.5.1.88"/>
    </reaction>
</comment>
<comment type="cofactor">
    <cofactor evidence="1">
        <name>Fe(2+)</name>
        <dbReference type="ChEBI" id="CHEBI:29033"/>
    </cofactor>
    <text evidence="1">Binds 1 Fe(2+) ion.</text>
</comment>
<comment type="similarity">
    <text evidence="1">Belongs to the polypeptide deformylase family.</text>
</comment>
<reference key="1">
    <citation type="journal article" date="2007" name="Science">
        <title>Legumes symbioses: absence of nod genes in photosynthetic bradyrhizobia.</title>
        <authorList>
            <person name="Giraud E."/>
            <person name="Moulin L."/>
            <person name="Vallenet D."/>
            <person name="Barbe V."/>
            <person name="Cytryn E."/>
            <person name="Avarre J.-C."/>
            <person name="Jaubert M."/>
            <person name="Simon D."/>
            <person name="Cartieaux F."/>
            <person name="Prin Y."/>
            <person name="Bena G."/>
            <person name="Hannibal L."/>
            <person name="Fardoux J."/>
            <person name="Kojadinovic M."/>
            <person name="Vuillet L."/>
            <person name="Lajus A."/>
            <person name="Cruveiller S."/>
            <person name="Rouy Z."/>
            <person name="Mangenot S."/>
            <person name="Segurens B."/>
            <person name="Dossat C."/>
            <person name="Franck W.L."/>
            <person name="Chang W.-S."/>
            <person name="Saunders E."/>
            <person name="Bruce D."/>
            <person name="Richardson P."/>
            <person name="Normand P."/>
            <person name="Dreyfus B."/>
            <person name="Pignol D."/>
            <person name="Stacey G."/>
            <person name="Emerich D."/>
            <person name="Vermeglio A."/>
            <person name="Medigue C."/>
            <person name="Sadowsky M."/>
        </authorList>
    </citation>
    <scope>NUCLEOTIDE SEQUENCE [LARGE SCALE GENOMIC DNA]</scope>
    <source>
        <strain>BTAi1 / ATCC BAA-1182</strain>
    </source>
</reference>
<keyword id="KW-0378">Hydrolase</keyword>
<keyword id="KW-0408">Iron</keyword>
<keyword id="KW-0479">Metal-binding</keyword>
<keyword id="KW-0648">Protein biosynthesis</keyword>
<keyword id="KW-1185">Reference proteome</keyword>
<name>DEF_BRASB</name>
<protein>
    <recommendedName>
        <fullName evidence="1">Peptide deformylase</fullName>
        <shortName evidence="1">PDF</shortName>
        <ecNumber evidence="1">3.5.1.88</ecNumber>
    </recommendedName>
    <alternativeName>
        <fullName evidence="1">Polypeptide deformylase</fullName>
    </alternativeName>
</protein>
<evidence type="ECO:0000255" key="1">
    <source>
        <dbReference type="HAMAP-Rule" id="MF_00163"/>
    </source>
</evidence>
<organism>
    <name type="scientific">Bradyrhizobium sp. (strain BTAi1 / ATCC BAA-1182)</name>
    <dbReference type="NCBI Taxonomy" id="288000"/>
    <lineage>
        <taxon>Bacteria</taxon>
        <taxon>Pseudomonadati</taxon>
        <taxon>Pseudomonadota</taxon>
        <taxon>Alphaproteobacteria</taxon>
        <taxon>Hyphomicrobiales</taxon>
        <taxon>Nitrobacteraceae</taxon>
        <taxon>Bradyrhizobium</taxon>
    </lineage>
</organism>
<feature type="chain" id="PRO_0000301012" description="Peptide deformylase">
    <location>
        <begin position="1"/>
        <end position="175"/>
    </location>
</feature>
<feature type="active site" evidence="1">
    <location>
        <position position="141"/>
    </location>
</feature>
<feature type="binding site" evidence="1">
    <location>
        <position position="98"/>
    </location>
    <ligand>
        <name>Fe cation</name>
        <dbReference type="ChEBI" id="CHEBI:24875"/>
    </ligand>
</feature>
<feature type="binding site" evidence="1">
    <location>
        <position position="140"/>
    </location>
    <ligand>
        <name>Fe cation</name>
        <dbReference type="ChEBI" id="CHEBI:24875"/>
    </ligand>
</feature>
<feature type="binding site" evidence="1">
    <location>
        <position position="144"/>
    </location>
    <ligand>
        <name>Fe cation</name>
        <dbReference type="ChEBI" id="CHEBI:24875"/>
    </ligand>
</feature>
<accession>A5ESQ7</accession>
<gene>
    <name evidence="1" type="primary">def</name>
    <name type="ordered locus">BBta_7337</name>
</gene>
<proteinExistence type="inferred from homology"/>
<sequence>MSLREIIILPDKQLRLVSKPVEKVTPEIRQLVDDMFQTMYDAPGIGLAAIQVAQPLRVITMDLAKPDAGGETKREPRVFINPEIIAKSDELSIYEEGCLSIPEYYEEVERPARVRVRFTDLDGVLREEDAEGLYATCIQHEIDHLNGVLFIDYLSKLKRDRVLKKFTKAAKRAGE</sequence>
<dbReference type="EC" id="3.5.1.88" evidence="1"/>
<dbReference type="EMBL" id="CP000494">
    <property type="protein sequence ID" value="ABQ39201.1"/>
    <property type="molecule type" value="Genomic_DNA"/>
</dbReference>
<dbReference type="RefSeq" id="WP_012047104.1">
    <property type="nucleotide sequence ID" value="NC_009485.1"/>
</dbReference>
<dbReference type="SMR" id="A5ESQ7"/>
<dbReference type="STRING" id="288000.BBta_7337"/>
<dbReference type="KEGG" id="bbt:BBta_7337"/>
<dbReference type="eggNOG" id="COG0242">
    <property type="taxonomic scope" value="Bacteria"/>
</dbReference>
<dbReference type="HOGENOM" id="CLU_061901_2_0_5"/>
<dbReference type="OrthoDB" id="9804313at2"/>
<dbReference type="Proteomes" id="UP000000246">
    <property type="component" value="Chromosome"/>
</dbReference>
<dbReference type="GO" id="GO:0046872">
    <property type="term" value="F:metal ion binding"/>
    <property type="evidence" value="ECO:0007669"/>
    <property type="project" value="UniProtKB-KW"/>
</dbReference>
<dbReference type="GO" id="GO:0042586">
    <property type="term" value="F:peptide deformylase activity"/>
    <property type="evidence" value="ECO:0007669"/>
    <property type="project" value="UniProtKB-UniRule"/>
</dbReference>
<dbReference type="GO" id="GO:0043686">
    <property type="term" value="P:co-translational protein modification"/>
    <property type="evidence" value="ECO:0007669"/>
    <property type="project" value="TreeGrafter"/>
</dbReference>
<dbReference type="GO" id="GO:0006412">
    <property type="term" value="P:translation"/>
    <property type="evidence" value="ECO:0007669"/>
    <property type="project" value="UniProtKB-UniRule"/>
</dbReference>
<dbReference type="CDD" id="cd00487">
    <property type="entry name" value="Pep_deformylase"/>
    <property type="match status" value="1"/>
</dbReference>
<dbReference type="FunFam" id="3.90.45.10:FF:000001">
    <property type="entry name" value="Peptide deformylase"/>
    <property type="match status" value="1"/>
</dbReference>
<dbReference type="Gene3D" id="3.90.45.10">
    <property type="entry name" value="Peptide deformylase"/>
    <property type="match status" value="1"/>
</dbReference>
<dbReference type="HAMAP" id="MF_00163">
    <property type="entry name" value="Pep_deformylase"/>
    <property type="match status" value="1"/>
</dbReference>
<dbReference type="InterPro" id="IPR023635">
    <property type="entry name" value="Peptide_deformylase"/>
</dbReference>
<dbReference type="InterPro" id="IPR036821">
    <property type="entry name" value="Peptide_deformylase_sf"/>
</dbReference>
<dbReference type="NCBIfam" id="TIGR00079">
    <property type="entry name" value="pept_deformyl"/>
    <property type="match status" value="1"/>
</dbReference>
<dbReference type="NCBIfam" id="NF001159">
    <property type="entry name" value="PRK00150.1-3"/>
    <property type="match status" value="1"/>
</dbReference>
<dbReference type="PANTHER" id="PTHR10458">
    <property type="entry name" value="PEPTIDE DEFORMYLASE"/>
    <property type="match status" value="1"/>
</dbReference>
<dbReference type="PANTHER" id="PTHR10458:SF22">
    <property type="entry name" value="PEPTIDE DEFORMYLASE"/>
    <property type="match status" value="1"/>
</dbReference>
<dbReference type="Pfam" id="PF01327">
    <property type="entry name" value="Pep_deformylase"/>
    <property type="match status" value="1"/>
</dbReference>
<dbReference type="PIRSF" id="PIRSF004749">
    <property type="entry name" value="Pep_def"/>
    <property type="match status" value="1"/>
</dbReference>
<dbReference type="PRINTS" id="PR01576">
    <property type="entry name" value="PDEFORMYLASE"/>
</dbReference>
<dbReference type="SUPFAM" id="SSF56420">
    <property type="entry name" value="Peptide deformylase"/>
    <property type="match status" value="1"/>
</dbReference>